<feature type="chain" id="PRO_1000136651" description="UPF0266 membrane protein YobD">
    <location>
        <begin position="1"/>
        <end position="152"/>
    </location>
</feature>
<feature type="transmembrane region" description="Helical" evidence="1">
    <location>
        <begin position="6"/>
        <end position="26"/>
    </location>
</feature>
<feature type="transmembrane region" description="Helical" evidence="1">
    <location>
        <begin position="45"/>
        <end position="65"/>
    </location>
</feature>
<feature type="transmembrane region" description="Helical" evidence="1">
    <location>
        <begin position="67"/>
        <end position="87"/>
    </location>
</feature>
<keyword id="KW-0997">Cell inner membrane</keyword>
<keyword id="KW-1003">Cell membrane</keyword>
<keyword id="KW-0472">Membrane</keyword>
<keyword id="KW-0812">Transmembrane</keyword>
<keyword id="KW-1133">Transmembrane helix</keyword>
<sequence>MTITDLVLILFIAALLAYALYDQFIMPRRNGPTLLSIALLRRGRVDSVIFVGLVAILIYNNVTSHGAQMTTWLLSALALMGFYIFWIRTPRIIFKQRGFFFANVWIEYNRIKEMNLSEDGVLVMQLEQRRLLIRVRNIDDLEKIYKLLIENQ</sequence>
<name>YOBD_SALSV</name>
<dbReference type="EMBL" id="CP001127">
    <property type="protein sequence ID" value="ACF88740.1"/>
    <property type="molecule type" value="Genomic_DNA"/>
</dbReference>
<dbReference type="RefSeq" id="WP_000156280.1">
    <property type="nucleotide sequence ID" value="NC_011094.1"/>
</dbReference>
<dbReference type="KEGG" id="sew:SeSA_A1976"/>
<dbReference type="HOGENOM" id="CLU_133645_0_0_6"/>
<dbReference type="Proteomes" id="UP000001865">
    <property type="component" value="Chromosome"/>
</dbReference>
<dbReference type="GO" id="GO:0005886">
    <property type="term" value="C:plasma membrane"/>
    <property type="evidence" value="ECO:0007669"/>
    <property type="project" value="UniProtKB-SubCell"/>
</dbReference>
<dbReference type="HAMAP" id="MF_01071">
    <property type="entry name" value="UPF0266"/>
    <property type="match status" value="1"/>
</dbReference>
<dbReference type="InterPro" id="IPR009328">
    <property type="entry name" value="DUF986"/>
</dbReference>
<dbReference type="NCBIfam" id="NF002791">
    <property type="entry name" value="PRK02913.1"/>
    <property type="match status" value="1"/>
</dbReference>
<dbReference type="Pfam" id="PF06173">
    <property type="entry name" value="DUF986"/>
    <property type="match status" value="1"/>
</dbReference>
<dbReference type="PIRSF" id="PIRSF020687">
    <property type="entry name" value="UCP020687"/>
    <property type="match status" value="1"/>
</dbReference>
<reference key="1">
    <citation type="journal article" date="2011" name="J. Bacteriol.">
        <title>Comparative genomics of 28 Salmonella enterica isolates: evidence for CRISPR-mediated adaptive sublineage evolution.</title>
        <authorList>
            <person name="Fricke W.F."/>
            <person name="Mammel M.K."/>
            <person name="McDermott P.F."/>
            <person name="Tartera C."/>
            <person name="White D.G."/>
            <person name="Leclerc J.E."/>
            <person name="Ravel J."/>
            <person name="Cebula T.A."/>
        </authorList>
    </citation>
    <scope>NUCLEOTIDE SEQUENCE [LARGE SCALE GENOMIC DNA]</scope>
    <source>
        <strain>CVM19633</strain>
    </source>
</reference>
<comment type="subcellular location">
    <subcellularLocation>
        <location evidence="1">Cell inner membrane</location>
        <topology evidence="1">Multi-pass membrane protein</topology>
    </subcellularLocation>
</comment>
<comment type="similarity">
    <text evidence="1">Belongs to the UPF0266 family.</text>
</comment>
<evidence type="ECO:0000255" key="1">
    <source>
        <dbReference type="HAMAP-Rule" id="MF_01071"/>
    </source>
</evidence>
<gene>
    <name evidence="1" type="primary">yobD</name>
    <name type="ordered locus">SeSA_A1976</name>
</gene>
<proteinExistence type="inferred from homology"/>
<organism>
    <name type="scientific">Salmonella schwarzengrund (strain CVM19633)</name>
    <dbReference type="NCBI Taxonomy" id="439843"/>
    <lineage>
        <taxon>Bacteria</taxon>
        <taxon>Pseudomonadati</taxon>
        <taxon>Pseudomonadota</taxon>
        <taxon>Gammaproteobacteria</taxon>
        <taxon>Enterobacterales</taxon>
        <taxon>Enterobacteriaceae</taxon>
        <taxon>Salmonella</taxon>
    </lineage>
</organism>
<accession>B4TY03</accession>
<protein>
    <recommendedName>
        <fullName evidence="1">UPF0266 membrane protein YobD</fullName>
    </recommendedName>
</protein>